<keyword id="KW-0067">ATP-binding</keyword>
<keyword id="KW-0315">Glutamine amidotransferase</keyword>
<keyword id="KW-0436">Ligase</keyword>
<keyword id="KW-0460">Magnesium</keyword>
<keyword id="KW-0479">Metal-binding</keyword>
<keyword id="KW-0547">Nucleotide-binding</keyword>
<keyword id="KW-0665">Pyrimidine biosynthesis</keyword>
<keyword id="KW-1185">Reference proteome</keyword>
<evidence type="ECO:0000255" key="1">
    <source>
        <dbReference type="HAMAP-Rule" id="MF_01227"/>
    </source>
</evidence>
<sequence>MSKFVFVTGGVVSSIGKGIVAASLGRLLKSRGYSVSILKLDPYLNVDPGTMSPFQHGEVFVTEDGAETDLDLGHYERFTDTAMTRLNSVTTGSIYQAVINKERRGSYNGGTVQVIPHITGEIRERIHRVAANSNADIIITEIGGTVGDIESLPFLEAIREFKNDVNRNDVAYIHVTLLPYIKTSGEIKTKPTQHSVKELRSIGIQPDLLVCRSDKSINEALKKKLSGFCGVSINSVIEALDADSIYSVPLSLKKEGLCKETLNYLELEDKKCDLKNWEQLIHNLRNPGGPIKVALVGKYIELGDAYLSVVEALRHACIEQKALLDLHWVSAEMIEKNSAETYLNEVDAIVVPGGFGNRGVNGKIAAIKFARENKIPFLGLCLGMQCAVIEWARNVAHLPDASSSELDPNTPNPVIHLLPEQQDVVDLGGTMRLGVYPCRLTKNTTGKNLYDEDVIYERHRHRYEFNNYYKQSFLDSGYKISGTSPDGRLVELIELENHPYFLACQYHPEFLSRPGKPHPLFKGLIKASQDKLTQSN</sequence>
<accession>A3PFH8</accession>
<name>PYRG_PROM0</name>
<reference key="1">
    <citation type="journal article" date="2007" name="PLoS Genet.">
        <title>Patterns and implications of gene gain and loss in the evolution of Prochlorococcus.</title>
        <authorList>
            <person name="Kettler G.C."/>
            <person name="Martiny A.C."/>
            <person name="Huang K."/>
            <person name="Zucker J."/>
            <person name="Coleman M.L."/>
            <person name="Rodrigue S."/>
            <person name="Chen F."/>
            <person name="Lapidus A."/>
            <person name="Ferriera S."/>
            <person name="Johnson J."/>
            <person name="Steglich C."/>
            <person name="Church G.M."/>
            <person name="Richardson P."/>
            <person name="Chisholm S.W."/>
        </authorList>
    </citation>
    <scope>NUCLEOTIDE SEQUENCE [LARGE SCALE GENOMIC DNA]</scope>
    <source>
        <strain>MIT 9301</strain>
    </source>
</reference>
<protein>
    <recommendedName>
        <fullName evidence="1">CTP synthase</fullName>
        <ecNumber evidence="1">6.3.4.2</ecNumber>
    </recommendedName>
    <alternativeName>
        <fullName evidence="1">Cytidine 5'-triphosphate synthase</fullName>
    </alternativeName>
    <alternativeName>
        <fullName evidence="1">Cytidine triphosphate synthetase</fullName>
        <shortName evidence="1">CTP synthetase</shortName>
        <shortName evidence="1">CTPS</shortName>
    </alternativeName>
    <alternativeName>
        <fullName evidence="1">UTP--ammonia ligase</fullName>
    </alternativeName>
</protein>
<proteinExistence type="inferred from homology"/>
<dbReference type="EC" id="6.3.4.2" evidence="1"/>
<dbReference type="EMBL" id="CP000576">
    <property type="protein sequence ID" value="ABO18503.1"/>
    <property type="molecule type" value="Genomic_DNA"/>
</dbReference>
<dbReference type="RefSeq" id="WP_011863785.1">
    <property type="nucleotide sequence ID" value="NC_009091.1"/>
</dbReference>
<dbReference type="SMR" id="A3PFH8"/>
<dbReference type="STRING" id="167546.P9301_18801"/>
<dbReference type="KEGG" id="pmg:P9301_18801"/>
<dbReference type="eggNOG" id="COG0504">
    <property type="taxonomic scope" value="Bacteria"/>
</dbReference>
<dbReference type="HOGENOM" id="CLU_011675_5_0_3"/>
<dbReference type="OrthoDB" id="9801107at2"/>
<dbReference type="UniPathway" id="UPA00159">
    <property type="reaction ID" value="UER00277"/>
</dbReference>
<dbReference type="Proteomes" id="UP000001430">
    <property type="component" value="Chromosome"/>
</dbReference>
<dbReference type="GO" id="GO:0005829">
    <property type="term" value="C:cytosol"/>
    <property type="evidence" value="ECO:0007669"/>
    <property type="project" value="TreeGrafter"/>
</dbReference>
<dbReference type="GO" id="GO:0005524">
    <property type="term" value="F:ATP binding"/>
    <property type="evidence" value="ECO:0007669"/>
    <property type="project" value="UniProtKB-KW"/>
</dbReference>
<dbReference type="GO" id="GO:0003883">
    <property type="term" value="F:CTP synthase activity"/>
    <property type="evidence" value="ECO:0007669"/>
    <property type="project" value="UniProtKB-UniRule"/>
</dbReference>
<dbReference type="GO" id="GO:0004359">
    <property type="term" value="F:glutaminase activity"/>
    <property type="evidence" value="ECO:0007669"/>
    <property type="project" value="RHEA"/>
</dbReference>
<dbReference type="GO" id="GO:0042802">
    <property type="term" value="F:identical protein binding"/>
    <property type="evidence" value="ECO:0007669"/>
    <property type="project" value="TreeGrafter"/>
</dbReference>
<dbReference type="GO" id="GO:0046872">
    <property type="term" value="F:metal ion binding"/>
    <property type="evidence" value="ECO:0007669"/>
    <property type="project" value="UniProtKB-KW"/>
</dbReference>
<dbReference type="GO" id="GO:0044210">
    <property type="term" value="P:'de novo' CTP biosynthetic process"/>
    <property type="evidence" value="ECO:0007669"/>
    <property type="project" value="UniProtKB-UniRule"/>
</dbReference>
<dbReference type="GO" id="GO:0019856">
    <property type="term" value="P:pyrimidine nucleobase biosynthetic process"/>
    <property type="evidence" value="ECO:0007669"/>
    <property type="project" value="TreeGrafter"/>
</dbReference>
<dbReference type="CDD" id="cd03113">
    <property type="entry name" value="CTPS_N"/>
    <property type="match status" value="1"/>
</dbReference>
<dbReference type="CDD" id="cd01746">
    <property type="entry name" value="GATase1_CTP_Synthase"/>
    <property type="match status" value="1"/>
</dbReference>
<dbReference type="FunFam" id="3.40.50.300:FF:000009">
    <property type="entry name" value="CTP synthase"/>
    <property type="match status" value="1"/>
</dbReference>
<dbReference type="FunFam" id="3.40.50.880:FF:000002">
    <property type="entry name" value="CTP synthase"/>
    <property type="match status" value="1"/>
</dbReference>
<dbReference type="Gene3D" id="3.40.50.880">
    <property type="match status" value="1"/>
</dbReference>
<dbReference type="Gene3D" id="3.40.50.300">
    <property type="entry name" value="P-loop containing nucleotide triphosphate hydrolases"/>
    <property type="match status" value="1"/>
</dbReference>
<dbReference type="HAMAP" id="MF_01227">
    <property type="entry name" value="PyrG"/>
    <property type="match status" value="1"/>
</dbReference>
<dbReference type="InterPro" id="IPR029062">
    <property type="entry name" value="Class_I_gatase-like"/>
</dbReference>
<dbReference type="InterPro" id="IPR004468">
    <property type="entry name" value="CTP_synthase"/>
</dbReference>
<dbReference type="InterPro" id="IPR017456">
    <property type="entry name" value="CTP_synthase_N"/>
</dbReference>
<dbReference type="InterPro" id="IPR017926">
    <property type="entry name" value="GATASE"/>
</dbReference>
<dbReference type="InterPro" id="IPR033828">
    <property type="entry name" value="GATase1_CTP_Synthase"/>
</dbReference>
<dbReference type="InterPro" id="IPR027417">
    <property type="entry name" value="P-loop_NTPase"/>
</dbReference>
<dbReference type="NCBIfam" id="NF003792">
    <property type="entry name" value="PRK05380.1"/>
    <property type="match status" value="1"/>
</dbReference>
<dbReference type="NCBIfam" id="TIGR00337">
    <property type="entry name" value="PyrG"/>
    <property type="match status" value="1"/>
</dbReference>
<dbReference type="PANTHER" id="PTHR11550">
    <property type="entry name" value="CTP SYNTHASE"/>
    <property type="match status" value="1"/>
</dbReference>
<dbReference type="PANTHER" id="PTHR11550:SF0">
    <property type="entry name" value="CTP SYNTHASE-RELATED"/>
    <property type="match status" value="1"/>
</dbReference>
<dbReference type="Pfam" id="PF06418">
    <property type="entry name" value="CTP_synth_N"/>
    <property type="match status" value="1"/>
</dbReference>
<dbReference type="Pfam" id="PF00117">
    <property type="entry name" value="GATase"/>
    <property type="match status" value="1"/>
</dbReference>
<dbReference type="SUPFAM" id="SSF52317">
    <property type="entry name" value="Class I glutamine amidotransferase-like"/>
    <property type="match status" value="1"/>
</dbReference>
<dbReference type="SUPFAM" id="SSF52540">
    <property type="entry name" value="P-loop containing nucleoside triphosphate hydrolases"/>
    <property type="match status" value="1"/>
</dbReference>
<dbReference type="PROSITE" id="PS51273">
    <property type="entry name" value="GATASE_TYPE_1"/>
    <property type="match status" value="1"/>
</dbReference>
<organism>
    <name type="scientific">Prochlorococcus marinus (strain MIT 9301)</name>
    <dbReference type="NCBI Taxonomy" id="167546"/>
    <lineage>
        <taxon>Bacteria</taxon>
        <taxon>Bacillati</taxon>
        <taxon>Cyanobacteriota</taxon>
        <taxon>Cyanophyceae</taxon>
        <taxon>Synechococcales</taxon>
        <taxon>Prochlorococcaceae</taxon>
        <taxon>Prochlorococcus</taxon>
    </lineage>
</organism>
<feature type="chain" id="PRO_1000139521" description="CTP synthase">
    <location>
        <begin position="1"/>
        <end position="536"/>
    </location>
</feature>
<feature type="domain" description="Glutamine amidotransferase type-1" evidence="1">
    <location>
        <begin position="292"/>
        <end position="534"/>
    </location>
</feature>
<feature type="region of interest" description="Amidoligase domain" evidence="1">
    <location>
        <begin position="1"/>
        <end position="267"/>
    </location>
</feature>
<feature type="active site" description="Nucleophile; for glutamine hydrolysis" evidence="1">
    <location>
        <position position="381"/>
    </location>
</feature>
<feature type="active site" evidence="1">
    <location>
        <position position="507"/>
    </location>
</feature>
<feature type="active site" evidence="1">
    <location>
        <position position="509"/>
    </location>
</feature>
<feature type="binding site" evidence="1">
    <location>
        <position position="13"/>
    </location>
    <ligand>
        <name>CTP</name>
        <dbReference type="ChEBI" id="CHEBI:37563"/>
        <note>allosteric inhibitor</note>
    </ligand>
</feature>
<feature type="binding site" evidence="1">
    <location>
        <position position="13"/>
    </location>
    <ligand>
        <name>UTP</name>
        <dbReference type="ChEBI" id="CHEBI:46398"/>
    </ligand>
</feature>
<feature type="binding site" evidence="1">
    <location>
        <begin position="14"/>
        <end position="19"/>
    </location>
    <ligand>
        <name>ATP</name>
        <dbReference type="ChEBI" id="CHEBI:30616"/>
    </ligand>
</feature>
<feature type="binding site" evidence="1">
    <location>
        <position position="71"/>
    </location>
    <ligand>
        <name>ATP</name>
        <dbReference type="ChEBI" id="CHEBI:30616"/>
    </ligand>
</feature>
<feature type="binding site" evidence="1">
    <location>
        <position position="71"/>
    </location>
    <ligand>
        <name>Mg(2+)</name>
        <dbReference type="ChEBI" id="CHEBI:18420"/>
    </ligand>
</feature>
<feature type="binding site" evidence="1">
    <location>
        <position position="141"/>
    </location>
    <ligand>
        <name>Mg(2+)</name>
        <dbReference type="ChEBI" id="CHEBI:18420"/>
    </ligand>
</feature>
<feature type="binding site" evidence="1">
    <location>
        <begin position="148"/>
        <end position="150"/>
    </location>
    <ligand>
        <name>CTP</name>
        <dbReference type="ChEBI" id="CHEBI:37563"/>
        <note>allosteric inhibitor</note>
    </ligand>
</feature>
<feature type="binding site" evidence="1">
    <location>
        <begin position="188"/>
        <end position="193"/>
    </location>
    <ligand>
        <name>CTP</name>
        <dbReference type="ChEBI" id="CHEBI:37563"/>
        <note>allosteric inhibitor</note>
    </ligand>
</feature>
<feature type="binding site" evidence="1">
    <location>
        <begin position="188"/>
        <end position="193"/>
    </location>
    <ligand>
        <name>UTP</name>
        <dbReference type="ChEBI" id="CHEBI:46398"/>
    </ligand>
</feature>
<feature type="binding site" evidence="1">
    <location>
        <position position="224"/>
    </location>
    <ligand>
        <name>CTP</name>
        <dbReference type="ChEBI" id="CHEBI:37563"/>
        <note>allosteric inhibitor</note>
    </ligand>
</feature>
<feature type="binding site" evidence="1">
    <location>
        <position position="224"/>
    </location>
    <ligand>
        <name>UTP</name>
        <dbReference type="ChEBI" id="CHEBI:46398"/>
    </ligand>
</feature>
<feature type="binding site" evidence="1">
    <location>
        <position position="354"/>
    </location>
    <ligand>
        <name>L-glutamine</name>
        <dbReference type="ChEBI" id="CHEBI:58359"/>
    </ligand>
</feature>
<feature type="binding site" evidence="1">
    <location>
        <begin position="382"/>
        <end position="385"/>
    </location>
    <ligand>
        <name>L-glutamine</name>
        <dbReference type="ChEBI" id="CHEBI:58359"/>
    </ligand>
</feature>
<feature type="binding site" evidence="1">
    <location>
        <position position="405"/>
    </location>
    <ligand>
        <name>L-glutamine</name>
        <dbReference type="ChEBI" id="CHEBI:58359"/>
    </ligand>
</feature>
<feature type="binding site" evidence="1">
    <location>
        <position position="462"/>
    </location>
    <ligand>
        <name>L-glutamine</name>
        <dbReference type="ChEBI" id="CHEBI:58359"/>
    </ligand>
</feature>
<comment type="function">
    <text evidence="1">Catalyzes the ATP-dependent amination of UTP to CTP with either L-glutamine or ammonia as the source of nitrogen. Regulates intracellular CTP levels through interactions with the four ribonucleotide triphosphates.</text>
</comment>
<comment type="catalytic activity">
    <reaction evidence="1">
        <text>UTP + L-glutamine + ATP + H2O = CTP + L-glutamate + ADP + phosphate + 2 H(+)</text>
        <dbReference type="Rhea" id="RHEA:26426"/>
        <dbReference type="ChEBI" id="CHEBI:15377"/>
        <dbReference type="ChEBI" id="CHEBI:15378"/>
        <dbReference type="ChEBI" id="CHEBI:29985"/>
        <dbReference type="ChEBI" id="CHEBI:30616"/>
        <dbReference type="ChEBI" id="CHEBI:37563"/>
        <dbReference type="ChEBI" id="CHEBI:43474"/>
        <dbReference type="ChEBI" id="CHEBI:46398"/>
        <dbReference type="ChEBI" id="CHEBI:58359"/>
        <dbReference type="ChEBI" id="CHEBI:456216"/>
        <dbReference type="EC" id="6.3.4.2"/>
    </reaction>
</comment>
<comment type="catalytic activity">
    <reaction evidence="1">
        <text>L-glutamine + H2O = L-glutamate + NH4(+)</text>
        <dbReference type="Rhea" id="RHEA:15889"/>
        <dbReference type="ChEBI" id="CHEBI:15377"/>
        <dbReference type="ChEBI" id="CHEBI:28938"/>
        <dbReference type="ChEBI" id="CHEBI:29985"/>
        <dbReference type="ChEBI" id="CHEBI:58359"/>
    </reaction>
</comment>
<comment type="catalytic activity">
    <reaction evidence="1">
        <text>UTP + NH4(+) + ATP = CTP + ADP + phosphate + 2 H(+)</text>
        <dbReference type="Rhea" id="RHEA:16597"/>
        <dbReference type="ChEBI" id="CHEBI:15378"/>
        <dbReference type="ChEBI" id="CHEBI:28938"/>
        <dbReference type="ChEBI" id="CHEBI:30616"/>
        <dbReference type="ChEBI" id="CHEBI:37563"/>
        <dbReference type="ChEBI" id="CHEBI:43474"/>
        <dbReference type="ChEBI" id="CHEBI:46398"/>
        <dbReference type="ChEBI" id="CHEBI:456216"/>
    </reaction>
</comment>
<comment type="activity regulation">
    <text evidence="1">Allosterically activated by GTP, when glutamine is the substrate; GTP has no effect on the reaction when ammonia is the substrate. The allosteric effector GTP functions by stabilizing the protein conformation that binds the tetrahedral intermediate(s) formed during glutamine hydrolysis. Inhibited by the product CTP, via allosteric rather than competitive inhibition.</text>
</comment>
<comment type="pathway">
    <text evidence="1">Pyrimidine metabolism; CTP biosynthesis via de novo pathway; CTP from UDP: step 2/2.</text>
</comment>
<comment type="subunit">
    <text evidence="1">Homotetramer.</text>
</comment>
<comment type="miscellaneous">
    <text evidence="1">CTPSs have evolved a hybrid strategy for distinguishing between UTP and CTP. The overlapping regions of the product feedback inhibitory and substrate sites recognize a common feature in both compounds, the triphosphate moiety. To differentiate isosteric substrate and product pyrimidine rings, an additional pocket far from the expected kinase/ligase catalytic site, specifically recognizes the cytosine and ribose portions of the product inhibitor.</text>
</comment>
<comment type="similarity">
    <text evidence="1">Belongs to the CTP synthase family.</text>
</comment>
<gene>
    <name evidence="1" type="primary">pyrG</name>
    <name type="ordered locus">P9301_18801</name>
</gene>